<name>SOK2_YEAST</name>
<proteinExistence type="evidence at protein level"/>
<gene>
    <name type="primary">SOK2</name>
    <name type="ordered locus">YMR016C</name>
    <name type="ORF">YM9711.03C</name>
</gene>
<reference key="1">
    <citation type="journal article" date="1995" name="Mol. Cell. Biol.">
        <title>SOK2 may regulate cyclic AMP-dependent protein kinase-stimulated growth and pseudohyphal development by repressing transcription.</title>
        <authorList>
            <person name="Ward M.P."/>
            <person name="Gimeno C.J."/>
            <person name="Fink G.R."/>
            <person name="Garrett S."/>
        </authorList>
    </citation>
    <scope>NUCLEOTIDE SEQUENCE [GENOMIC DNA]</scope>
</reference>
<reference key="2">
    <citation type="journal article" date="1997" name="Nature">
        <title>The nucleotide sequence of Saccharomyces cerevisiae chromosome XIII.</title>
        <authorList>
            <person name="Bowman S."/>
            <person name="Churcher C.M."/>
            <person name="Badcock K."/>
            <person name="Brown D."/>
            <person name="Chillingworth T."/>
            <person name="Connor R."/>
            <person name="Dedman K."/>
            <person name="Devlin K."/>
            <person name="Gentles S."/>
            <person name="Hamlin N."/>
            <person name="Hunt S."/>
            <person name="Jagels K."/>
            <person name="Lye G."/>
            <person name="Moule S."/>
            <person name="Odell C."/>
            <person name="Pearson D."/>
            <person name="Rajandream M.A."/>
            <person name="Rice P."/>
            <person name="Skelton J."/>
            <person name="Walsh S.V."/>
            <person name="Whitehead S."/>
            <person name="Barrell B.G."/>
        </authorList>
    </citation>
    <scope>NUCLEOTIDE SEQUENCE [LARGE SCALE GENOMIC DNA]</scope>
    <source>
        <strain>ATCC 204508 / S288c</strain>
    </source>
</reference>
<reference key="3">
    <citation type="journal article" date="2014" name="G3 (Bethesda)">
        <title>The reference genome sequence of Saccharomyces cerevisiae: Then and now.</title>
        <authorList>
            <person name="Engel S.R."/>
            <person name="Dietrich F.S."/>
            <person name="Fisk D.G."/>
            <person name="Binkley G."/>
            <person name="Balakrishnan R."/>
            <person name="Costanzo M.C."/>
            <person name="Dwight S.S."/>
            <person name="Hitz B.C."/>
            <person name="Karra K."/>
            <person name="Nash R.S."/>
            <person name="Weng S."/>
            <person name="Wong E.D."/>
            <person name="Lloyd P."/>
            <person name="Skrzypek M.S."/>
            <person name="Miyasato S.R."/>
            <person name="Simison M."/>
            <person name="Cherry J.M."/>
        </authorList>
    </citation>
    <scope>GENOME REANNOTATION</scope>
    <source>
        <strain>ATCC 204508 / S288c</strain>
    </source>
</reference>
<reference key="4">
    <citation type="journal article" date="2003" name="Nature">
        <title>Global analysis of protein expression in yeast.</title>
        <authorList>
            <person name="Ghaemmaghami S."/>
            <person name="Huh W.-K."/>
            <person name="Bower K."/>
            <person name="Howson R.W."/>
            <person name="Belle A."/>
            <person name="Dephoure N."/>
            <person name="O'Shea E.K."/>
            <person name="Weissman J.S."/>
        </authorList>
    </citation>
    <scope>LEVEL OF PROTEIN EXPRESSION [LARGE SCALE ANALYSIS]</scope>
</reference>
<reference key="5">
    <citation type="journal article" date="2008" name="Mol. Cell. Proteomics">
        <title>A multidimensional chromatography technology for in-depth phosphoproteome analysis.</title>
        <authorList>
            <person name="Albuquerque C.P."/>
            <person name="Smolka M.B."/>
            <person name="Payne S.H."/>
            <person name="Bafna V."/>
            <person name="Eng J."/>
            <person name="Zhou H."/>
        </authorList>
    </citation>
    <scope>PHOSPHORYLATION [LARGE SCALE ANALYSIS] AT SER-771</scope>
    <scope>IDENTIFICATION BY MASS SPECTROMETRY [LARGE SCALE ANALYSIS]</scope>
</reference>
<reference key="6">
    <citation type="journal article" date="2009" name="Science">
        <title>Global analysis of Cdk1 substrate phosphorylation sites provides insights into evolution.</title>
        <authorList>
            <person name="Holt L.J."/>
            <person name="Tuch B.B."/>
            <person name="Villen J."/>
            <person name="Johnson A.D."/>
            <person name="Gygi S.P."/>
            <person name="Morgan D.O."/>
        </authorList>
    </citation>
    <scope>PHOSPHORYLATION [LARGE SCALE ANALYSIS] AT SER-771</scope>
    <scope>IDENTIFICATION BY MASS SPECTROMETRY [LARGE SCALE ANALYSIS]</scope>
</reference>
<reference key="7">
    <citation type="journal article" date="2012" name="Proc. Natl. Acad. Sci. U.S.A.">
        <title>N-terminal acetylome analyses and functional insights of the N-terminal acetyltransferase NatB.</title>
        <authorList>
            <person name="Van Damme P."/>
            <person name="Lasa M."/>
            <person name="Polevoda B."/>
            <person name="Gazquez C."/>
            <person name="Elosegui-Artola A."/>
            <person name="Kim D.S."/>
            <person name="De Juan-Pardo E."/>
            <person name="Demeyer K."/>
            <person name="Hole K."/>
            <person name="Larrea E."/>
            <person name="Timmerman E."/>
            <person name="Prieto J."/>
            <person name="Arnesen T."/>
            <person name="Sherman F."/>
            <person name="Gevaert K."/>
            <person name="Aldabe R."/>
        </authorList>
    </citation>
    <scope>IDENTIFICATION BY MASS SPECTROMETRY [LARGE SCALE ANALYSIS]</scope>
</reference>
<dbReference type="EMBL" id="S80522">
    <property type="protein sequence ID" value="AAB35749.1"/>
    <property type="molecule type" value="Genomic_DNA"/>
</dbReference>
<dbReference type="EMBL" id="Z49211">
    <property type="protein sequence ID" value="CAA89117.1"/>
    <property type="molecule type" value="Genomic_DNA"/>
</dbReference>
<dbReference type="EMBL" id="BK006946">
    <property type="protein sequence ID" value="DAA09914.1"/>
    <property type="molecule type" value="Genomic_DNA"/>
</dbReference>
<dbReference type="PIR" id="S54016">
    <property type="entry name" value="S54016"/>
</dbReference>
<dbReference type="RefSeq" id="NP_013729.1">
    <property type="nucleotide sequence ID" value="NM_001182512.1"/>
</dbReference>
<dbReference type="SMR" id="P53438"/>
<dbReference type="BioGRID" id="35187">
    <property type="interactions" value="252"/>
</dbReference>
<dbReference type="FunCoup" id="P53438">
    <property type="interactions" value="2449"/>
</dbReference>
<dbReference type="IntAct" id="P53438">
    <property type="interactions" value="2"/>
</dbReference>
<dbReference type="MINT" id="P53438"/>
<dbReference type="STRING" id="4932.YMR016C"/>
<dbReference type="GlyGen" id="P53438">
    <property type="glycosylation" value="2 sites, 1 O-linked glycan (1 site)"/>
</dbReference>
<dbReference type="iPTMnet" id="P53438"/>
<dbReference type="PaxDb" id="4932-YMR016C"/>
<dbReference type="PeptideAtlas" id="P53438"/>
<dbReference type="EnsemblFungi" id="YMR016C_mRNA">
    <property type="protein sequence ID" value="YMR016C"/>
    <property type="gene ID" value="YMR016C"/>
</dbReference>
<dbReference type="GeneID" id="855030"/>
<dbReference type="KEGG" id="sce:YMR016C"/>
<dbReference type="AGR" id="SGD:S000004618"/>
<dbReference type="SGD" id="S000004618">
    <property type="gene designation" value="SOK2"/>
</dbReference>
<dbReference type="VEuPathDB" id="FungiDB:YMR016C"/>
<dbReference type="eggNOG" id="ENOG502QW2C">
    <property type="taxonomic scope" value="Eukaryota"/>
</dbReference>
<dbReference type="GeneTree" id="ENSGT00940000176596"/>
<dbReference type="HOGENOM" id="CLU_357582_0_0_1"/>
<dbReference type="InParanoid" id="P53438"/>
<dbReference type="OrthoDB" id="5407653at2759"/>
<dbReference type="BioCyc" id="YEAST:G3O-32722-MONOMER"/>
<dbReference type="BioGRID-ORCS" id="855030">
    <property type="hits" value="5 hits in 13 CRISPR screens"/>
</dbReference>
<dbReference type="PRO" id="PR:P53438"/>
<dbReference type="Proteomes" id="UP000002311">
    <property type="component" value="Chromosome XIII"/>
</dbReference>
<dbReference type="RNAct" id="P53438">
    <property type="molecule type" value="protein"/>
</dbReference>
<dbReference type="GO" id="GO:0005829">
    <property type="term" value="C:cytosol"/>
    <property type="evidence" value="ECO:0000314"/>
    <property type="project" value="SGD"/>
</dbReference>
<dbReference type="GO" id="GO:0005634">
    <property type="term" value="C:nucleus"/>
    <property type="evidence" value="ECO:0000314"/>
    <property type="project" value="SGD"/>
</dbReference>
<dbReference type="GO" id="GO:0003700">
    <property type="term" value="F:DNA-binding transcription factor activity"/>
    <property type="evidence" value="ECO:0000250"/>
    <property type="project" value="SGD"/>
</dbReference>
<dbReference type="GO" id="GO:0043565">
    <property type="term" value="F:sequence-specific DNA binding"/>
    <property type="evidence" value="ECO:0000318"/>
    <property type="project" value="GO_Central"/>
</dbReference>
<dbReference type="GO" id="GO:0045944">
    <property type="term" value="P:positive regulation of transcription by RNA polymerase II"/>
    <property type="evidence" value="ECO:0000318"/>
    <property type="project" value="GO_Central"/>
</dbReference>
<dbReference type="GO" id="GO:0007124">
    <property type="term" value="P:pseudohyphal growth"/>
    <property type="evidence" value="ECO:0000315"/>
    <property type="project" value="SGD"/>
</dbReference>
<dbReference type="FunFam" id="3.10.260.10:FF:000003">
    <property type="entry name" value="Ascospore maturation 1 protein"/>
    <property type="match status" value="1"/>
</dbReference>
<dbReference type="Gene3D" id="3.10.260.10">
    <property type="entry name" value="Transcription regulator HTH, APSES-type DNA-binding domain"/>
    <property type="match status" value="1"/>
</dbReference>
<dbReference type="InterPro" id="IPR029790">
    <property type="entry name" value="EFG1/Phd1/StuA"/>
</dbReference>
<dbReference type="InterPro" id="IPR036887">
    <property type="entry name" value="HTH_APSES_sf"/>
</dbReference>
<dbReference type="InterPro" id="IPR018004">
    <property type="entry name" value="KilA/APSES_HTH"/>
</dbReference>
<dbReference type="InterPro" id="IPR003163">
    <property type="entry name" value="Tscrpt_reg_HTH_APSES-type"/>
</dbReference>
<dbReference type="PANTHER" id="PTHR47792">
    <property type="entry name" value="PROTEIN SOK2-RELATED"/>
    <property type="match status" value="1"/>
</dbReference>
<dbReference type="PANTHER" id="PTHR47792:SF1">
    <property type="entry name" value="PROTEIN SOK2-RELATED"/>
    <property type="match status" value="1"/>
</dbReference>
<dbReference type="Pfam" id="PF04383">
    <property type="entry name" value="KilA-N"/>
    <property type="match status" value="1"/>
</dbReference>
<dbReference type="SMART" id="SM01252">
    <property type="entry name" value="KilA-N"/>
    <property type="match status" value="1"/>
</dbReference>
<dbReference type="SUPFAM" id="SSF54616">
    <property type="entry name" value="DNA-binding domain of Mlu1-box binding protein MBP1"/>
    <property type="match status" value="1"/>
</dbReference>
<dbReference type="PROSITE" id="PS51299">
    <property type="entry name" value="HTH_APSES"/>
    <property type="match status" value="1"/>
</dbReference>
<sequence>MPIGNPINTNDIKSNRMRQESNMSAVSNSESTIGQSTQQQQQQQQYLGQSVQPLMPVSYQYVVPEQWPYPQYYQQPQSQSQQQLQSQPQMYQVQESFQSSGSDSNASNPPSTSVGVPSNATATALPNGSAITTKKSNNSTNISNNVPYYYYFPQMQAQQSMAYSYPQAYYYYPANGDGTTNGATPSVTSNQVQNPNLEKTYSTFEQQQQHQQQQQLQAQTYPAQPPKIGNAFSKFSKSGPPSDSSSGSMSPNSNRTSRNSNSISSLAQQPPMSNYPQPSTYQYPGFHKTSSIPNSHSPIPPRSLTTPTQGPTSQNGPLSYNLPQVGLLPPQQQQQVSPLYDGNSITPPVKPSTDQETYLTANRHGVSDQQYDSMAKTMNSFQTTTIRHPMPLIATTNATGSNTSGTSASIIRPRVTTTMWEDEKTLCYQVEANGISVVRRADNDMVNGTKLLNVTKMTRGRRDGILKAEKIRHVVKIGSMHLKGVWIPFERALAIAQREKIADYLYPLFIRDIQSVLKQNNPSNDSSSSSSSTGIKSISPRTYYQPINNYQNPNGPSNISAAQLTYSSMNLNNKIIPNNSIPAVSTIAAGEKPLKKCTMPNSNQLEGHTITNLQTLSATMPMKQQLMGNIASPLSYPRNATMNSASTLGITPADSKPLTPSPTTTNTNQSSESNVGSIHTGITLPRVESESASHSKWSKEADSGNTVPDNQTLKEPRSSQLPISALTSTDTDKIKTSTSDEATQPNEPSEAEPVKESESSKSQVDGAGDVSNEEIAADDTKKQEK</sequence>
<feature type="chain" id="PRO_0000072036" description="Protein SOK2">
    <location>
        <begin position="1"/>
        <end position="785"/>
    </location>
</feature>
<feature type="domain" description="HTH APSES-type" evidence="1">
    <location>
        <begin position="414"/>
        <end position="520"/>
    </location>
</feature>
<feature type="DNA-binding region" description="H-T-H motif" evidence="1">
    <location>
        <begin position="448"/>
        <end position="469"/>
    </location>
</feature>
<feature type="region of interest" description="Disordered" evidence="2">
    <location>
        <begin position="1"/>
        <end position="45"/>
    </location>
</feature>
<feature type="region of interest" description="Disordered" evidence="2">
    <location>
        <begin position="78"/>
        <end position="121"/>
    </location>
</feature>
<feature type="region of interest" description="Disordered" evidence="2">
    <location>
        <begin position="202"/>
        <end position="355"/>
    </location>
</feature>
<feature type="region of interest" description="Disordered" evidence="2">
    <location>
        <begin position="519"/>
        <end position="538"/>
    </location>
</feature>
<feature type="region of interest" description="Disordered" evidence="2">
    <location>
        <begin position="642"/>
        <end position="785"/>
    </location>
</feature>
<feature type="compositionally biased region" description="Polar residues" evidence="2">
    <location>
        <begin position="1"/>
        <end position="12"/>
    </location>
</feature>
<feature type="compositionally biased region" description="Polar residues" evidence="2">
    <location>
        <begin position="20"/>
        <end position="37"/>
    </location>
</feature>
<feature type="compositionally biased region" description="Low complexity" evidence="2">
    <location>
        <begin position="78"/>
        <end position="94"/>
    </location>
</feature>
<feature type="compositionally biased region" description="Polar residues" evidence="2">
    <location>
        <begin position="95"/>
        <end position="121"/>
    </location>
</feature>
<feature type="compositionally biased region" description="Low complexity" evidence="2">
    <location>
        <begin position="206"/>
        <end position="219"/>
    </location>
</feature>
<feature type="compositionally biased region" description="Low complexity" evidence="2">
    <location>
        <begin position="232"/>
        <end position="265"/>
    </location>
</feature>
<feature type="compositionally biased region" description="Polar residues" evidence="2">
    <location>
        <begin position="266"/>
        <end position="282"/>
    </location>
</feature>
<feature type="compositionally biased region" description="Polar residues" evidence="2">
    <location>
        <begin position="304"/>
        <end position="318"/>
    </location>
</feature>
<feature type="compositionally biased region" description="Low complexity" evidence="2">
    <location>
        <begin position="322"/>
        <end position="339"/>
    </location>
</feature>
<feature type="compositionally biased region" description="Low complexity" evidence="2">
    <location>
        <begin position="523"/>
        <end position="538"/>
    </location>
</feature>
<feature type="compositionally biased region" description="Low complexity" evidence="2">
    <location>
        <begin position="655"/>
        <end position="674"/>
    </location>
</feature>
<feature type="compositionally biased region" description="Basic and acidic residues" evidence="2">
    <location>
        <begin position="687"/>
        <end position="702"/>
    </location>
</feature>
<feature type="modified residue" description="Phosphoserine" evidence="5 6">
    <location>
        <position position="771"/>
    </location>
</feature>
<accession>P53438</accession>
<accession>D6VZJ0</accession>
<keyword id="KW-0238">DNA-binding</keyword>
<keyword id="KW-0539">Nucleus</keyword>
<keyword id="KW-0597">Phosphoprotein</keyword>
<keyword id="KW-1185">Reference proteome</keyword>
<keyword id="KW-0804">Transcription</keyword>
<keyword id="KW-0805">Transcription regulation</keyword>
<comment type="function">
    <text>Plays a general regulatory role in the cyclic AMP-dependent protein kinase-stimulated (PKA) signal transduction pathway by regulating the expression of genes important in growth and development. May inhibit the switch from unicellular to filamentous growth.</text>
</comment>
<comment type="subcellular location">
    <subcellularLocation>
        <location evidence="1">Nucleus</location>
    </subcellularLocation>
</comment>
<comment type="miscellaneous">
    <text evidence="3">Present with 314 molecules/cell in log phase SD medium.</text>
</comment>
<comment type="similarity">
    <text evidence="4">Belongs to the EFG1/PHD1/stuA family.</text>
</comment>
<evidence type="ECO:0000255" key="1">
    <source>
        <dbReference type="PROSITE-ProRule" id="PRU00630"/>
    </source>
</evidence>
<evidence type="ECO:0000256" key="2">
    <source>
        <dbReference type="SAM" id="MobiDB-lite"/>
    </source>
</evidence>
<evidence type="ECO:0000269" key="3">
    <source>
    </source>
</evidence>
<evidence type="ECO:0000305" key="4"/>
<evidence type="ECO:0007744" key="5">
    <source>
    </source>
</evidence>
<evidence type="ECO:0007744" key="6">
    <source>
    </source>
</evidence>
<protein>
    <recommendedName>
        <fullName>Protein SOK2</fullName>
    </recommendedName>
</protein>
<organism>
    <name type="scientific">Saccharomyces cerevisiae (strain ATCC 204508 / S288c)</name>
    <name type="common">Baker's yeast</name>
    <dbReference type="NCBI Taxonomy" id="559292"/>
    <lineage>
        <taxon>Eukaryota</taxon>
        <taxon>Fungi</taxon>
        <taxon>Dikarya</taxon>
        <taxon>Ascomycota</taxon>
        <taxon>Saccharomycotina</taxon>
        <taxon>Saccharomycetes</taxon>
        <taxon>Saccharomycetales</taxon>
        <taxon>Saccharomycetaceae</taxon>
        <taxon>Saccharomyces</taxon>
    </lineage>
</organism>